<feature type="propeptide" id="PRO_0000024268" evidence="1">
    <location>
        <begin position="1"/>
        <end position="10"/>
    </location>
</feature>
<feature type="chain" id="PRO_0000024269" description="Competence protein ComGD">
    <location>
        <begin position="11"/>
        <end position="143"/>
    </location>
</feature>
<feature type="transmembrane region" description="Helical" evidence="3">
    <location>
        <begin position="11"/>
        <end position="31"/>
    </location>
</feature>
<feature type="modified residue" description="N-methylphenylalanine" evidence="4">
    <location>
        <position position="11"/>
    </location>
</feature>
<protein>
    <recommendedName>
        <fullName evidence="7">Competence protein ComGD</fullName>
    </recommendedName>
    <alternativeName>
        <fullName>ComG operon protein 4</fullName>
    </alternativeName>
    <alternativeName>
        <fullName evidence="2">Minor pilin ComGD</fullName>
    </alternativeName>
</protein>
<gene>
    <name type="primary">comGD</name>
    <name type="synonym">comG4</name>
    <name type="ordered locus">BSU24700</name>
</gene>
<evidence type="ECO:0000250" key="1"/>
<evidence type="ECO:0000250" key="2">
    <source>
        <dbReference type="UniProtKB" id="Q8DN89"/>
    </source>
</evidence>
<evidence type="ECO:0000255" key="3"/>
<evidence type="ECO:0000255" key="4">
    <source>
        <dbReference type="PROSITE-ProRule" id="PRU01070"/>
    </source>
</evidence>
<evidence type="ECO:0000269" key="5">
    <source>
    </source>
</evidence>
<evidence type="ECO:0000269" key="6">
    <source>
    </source>
</evidence>
<evidence type="ECO:0000305" key="7"/>
<accession>P25956</accession>
<keyword id="KW-1003">Cell membrane</keyword>
<keyword id="KW-0178">Competence</keyword>
<keyword id="KW-0472">Membrane</keyword>
<keyword id="KW-0488">Methylation</keyword>
<keyword id="KW-1185">Reference proteome</keyword>
<keyword id="KW-0812">Transmembrane</keyword>
<keyword id="KW-1133">Transmembrane helix</keyword>
<keyword id="KW-0813">Transport</keyword>
<proteinExistence type="inferred from homology"/>
<comment type="function">
    <text evidence="2 5 7">Required for formation of the type IV-like pilus (T4P) that plays a role in transformation (By similarity). Transformation pili are dynamically extended and retracted, perhaps thereby promoting DNA uptake and transformation (Probable). Required for transformation and DNA binding.</text>
</comment>
<comment type="subunit">
    <text evidence="2">The transformation pili are flexible filaments, consisting mainly of the major pilin ComGC and smaller amounts of the minor pilins, including at least ComGD, ComGF and ComGG. Interacts with ComGF. Interacts with ComGG.</text>
</comment>
<comment type="subcellular location">
    <subcellularLocation>
        <location evidence="6">Cell membrane</location>
        <topology evidence="6">Single-pass membrane protein</topology>
    </subcellularLocation>
    <subcellularLocation>
        <location evidence="6">Cell surface</location>
    </subcellularLocation>
    <text>The unprocessed form is an integral membrane protein. Upon cleavage, it is translocated to the outer face of the membrane.</text>
</comment>
<comment type="PTM">
    <text>Processing of ComGD in competent cells requires ComC.</text>
</comment>
<organism>
    <name type="scientific">Bacillus subtilis (strain 168)</name>
    <dbReference type="NCBI Taxonomy" id="224308"/>
    <lineage>
        <taxon>Bacteria</taxon>
        <taxon>Bacillati</taxon>
        <taxon>Bacillota</taxon>
        <taxon>Bacilli</taxon>
        <taxon>Bacillales</taxon>
        <taxon>Bacillaceae</taxon>
        <taxon>Bacillus</taxon>
    </lineage>
</organism>
<dbReference type="EMBL" id="M29691">
    <property type="protein sequence ID" value="AAA83370.1"/>
    <property type="molecule type" value="Genomic_DNA"/>
</dbReference>
<dbReference type="EMBL" id="D84432">
    <property type="protein sequence ID" value="BAA12536.1"/>
    <property type="molecule type" value="Genomic_DNA"/>
</dbReference>
<dbReference type="EMBL" id="AL009126">
    <property type="protein sequence ID" value="CAB14401.1"/>
    <property type="molecule type" value="Genomic_DNA"/>
</dbReference>
<dbReference type="PIR" id="E30338">
    <property type="entry name" value="E30338"/>
</dbReference>
<dbReference type="RefSeq" id="NP_390350.1">
    <property type="nucleotide sequence ID" value="NC_000964.3"/>
</dbReference>
<dbReference type="RefSeq" id="WP_004398628.1">
    <property type="nucleotide sequence ID" value="NZ_OZ025638.1"/>
</dbReference>
<dbReference type="SMR" id="P25956"/>
<dbReference type="FunCoup" id="P25956">
    <property type="interactions" value="28"/>
</dbReference>
<dbReference type="STRING" id="224308.BSU24700"/>
<dbReference type="PaxDb" id="224308-BSU24700"/>
<dbReference type="EnsemblBacteria" id="CAB14401">
    <property type="protein sequence ID" value="CAB14401"/>
    <property type="gene ID" value="BSU_24700"/>
</dbReference>
<dbReference type="GeneID" id="938531"/>
<dbReference type="KEGG" id="bsu:BSU24700"/>
<dbReference type="PATRIC" id="fig|224308.179.peg.2688"/>
<dbReference type="eggNOG" id="COG4970">
    <property type="taxonomic scope" value="Bacteria"/>
</dbReference>
<dbReference type="InParanoid" id="P25956"/>
<dbReference type="OrthoDB" id="1653576at2"/>
<dbReference type="BioCyc" id="BSUB:BSU24700-MONOMER"/>
<dbReference type="Proteomes" id="UP000001570">
    <property type="component" value="Chromosome"/>
</dbReference>
<dbReference type="GO" id="GO:0009986">
    <property type="term" value="C:cell surface"/>
    <property type="evidence" value="ECO:0007669"/>
    <property type="project" value="UniProtKB-SubCell"/>
</dbReference>
<dbReference type="GO" id="GO:0005886">
    <property type="term" value="C:plasma membrane"/>
    <property type="evidence" value="ECO:0007669"/>
    <property type="project" value="UniProtKB-SubCell"/>
</dbReference>
<dbReference type="GO" id="GO:0015627">
    <property type="term" value="C:type II protein secretion system complex"/>
    <property type="evidence" value="ECO:0007669"/>
    <property type="project" value="InterPro"/>
</dbReference>
<dbReference type="GO" id="GO:0030420">
    <property type="term" value="P:establishment of competence for transformation"/>
    <property type="evidence" value="ECO:0007669"/>
    <property type="project" value="UniProtKB-KW"/>
</dbReference>
<dbReference type="GO" id="GO:0015628">
    <property type="term" value="P:protein secretion by the type II secretion system"/>
    <property type="evidence" value="ECO:0007669"/>
    <property type="project" value="InterPro"/>
</dbReference>
<dbReference type="InterPro" id="IPR016785">
    <property type="entry name" value="ComGD"/>
</dbReference>
<dbReference type="InterPro" id="IPR012902">
    <property type="entry name" value="N_methyl_site"/>
</dbReference>
<dbReference type="InterPro" id="IPR045584">
    <property type="entry name" value="Pilin-like"/>
</dbReference>
<dbReference type="InterPro" id="IPR002416">
    <property type="entry name" value="T2SS_protein-GspH"/>
</dbReference>
<dbReference type="NCBIfam" id="NF040982">
    <property type="entry name" value="ComGD"/>
    <property type="match status" value="1"/>
</dbReference>
<dbReference type="NCBIfam" id="TIGR02532">
    <property type="entry name" value="IV_pilin_GFxxxE"/>
    <property type="match status" value="1"/>
</dbReference>
<dbReference type="Pfam" id="PF07963">
    <property type="entry name" value="N_methyl"/>
    <property type="match status" value="1"/>
</dbReference>
<dbReference type="PIRSF" id="PIRSF021292">
    <property type="entry name" value="Competence_ComGD"/>
    <property type="match status" value="1"/>
</dbReference>
<dbReference type="PRINTS" id="PR00885">
    <property type="entry name" value="BCTERIALGSPH"/>
</dbReference>
<dbReference type="SUPFAM" id="SSF54523">
    <property type="entry name" value="Pili subunits"/>
    <property type="match status" value="1"/>
</dbReference>
<dbReference type="PROSITE" id="PS00409">
    <property type="entry name" value="PROKAR_NTER_METHYL"/>
    <property type="match status" value="1"/>
</dbReference>
<name>COMGD_BACSU</name>
<reference key="1">
    <citation type="journal article" date="1989" name="J. Bacteriol.">
        <title>Nucleotide sequence and genetic organization of the Bacillus subtilis comG operon.</title>
        <authorList>
            <person name="Albano M."/>
            <person name="Breitling R."/>
            <person name="Dubnau D.A."/>
        </authorList>
    </citation>
    <scope>NUCLEOTIDE SEQUENCE [GENOMIC DNA]</scope>
</reference>
<reference key="2">
    <citation type="journal article" date="1996" name="Microbiology">
        <title>Systematic sequencing of the 283 kb 210 degrees-232 degrees region of the Bacillus subtilis genome containing the skin element and many sporulation genes.</title>
        <authorList>
            <person name="Mizuno M."/>
            <person name="Masuda S."/>
            <person name="Takemaru K."/>
            <person name="Hosono S."/>
            <person name="Sato T."/>
            <person name="Takeuchi M."/>
            <person name="Kobayashi Y."/>
        </authorList>
    </citation>
    <scope>NUCLEOTIDE SEQUENCE [GENOMIC DNA]</scope>
    <source>
        <strain>168 / JH642</strain>
    </source>
</reference>
<reference key="3">
    <citation type="journal article" date="1997" name="Nature">
        <title>The complete genome sequence of the Gram-positive bacterium Bacillus subtilis.</title>
        <authorList>
            <person name="Kunst F."/>
            <person name="Ogasawara N."/>
            <person name="Moszer I."/>
            <person name="Albertini A.M."/>
            <person name="Alloni G."/>
            <person name="Azevedo V."/>
            <person name="Bertero M.G."/>
            <person name="Bessieres P."/>
            <person name="Bolotin A."/>
            <person name="Borchert S."/>
            <person name="Borriss R."/>
            <person name="Boursier L."/>
            <person name="Brans A."/>
            <person name="Braun M."/>
            <person name="Brignell S.C."/>
            <person name="Bron S."/>
            <person name="Brouillet S."/>
            <person name="Bruschi C.V."/>
            <person name="Caldwell B."/>
            <person name="Capuano V."/>
            <person name="Carter N.M."/>
            <person name="Choi S.-K."/>
            <person name="Codani J.-J."/>
            <person name="Connerton I.F."/>
            <person name="Cummings N.J."/>
            <person name="Daniel R.A."/>
            <person name="Denizot F."/>
            <person name="Devine K.M."/>
            <person name="Duesterhoeft A."/>
            <person name="Ehrlich S.D."/>
            <person name="Emmerson P.T."/>
            <person name="Entian K.-D."/>
            <person name="Errington J."/>
            <person name="Fabret C."/>
            <person name="Ferrari E."/>
            <person name="Foulger D."/>
            <person name="Fritz C."/>
            <person name="Fujita M."/>
            <person name="Fujita Y."/>
            <person name="Fuma S."/>
            <person name="Galizzi A."/>
            <person name="Galleron N."/>
            <person name="Ghim S.-Y."/>
            <person name="Glaser P."/>
            <person name="Goffeau A."/>
            <person name="Golightly E.J."/>
            <person name="Grandi G."/>
            <person name="Guiseppi G."/>
            <person name="Guy B.J."/>
            <person name="Haga K."/>
            <person name="Haiech J."/>
            <person name="Harwood C.R."/>
            <person name="Henaut A."/>
            <person name="Hilbert H."/>
            <person name="Holsappel S."/>
            <person name="Hosono S."/>
            <person name="Hullo M.-F."/>
            <person name="Itaya M."/>
            <person name="Jones L.-M."/>
            <person name="Joris B."/>
            <person name="Karamata D."/>
            <person name="Kasahara Y."/>
            <person name="Klaerr-Blanchard M."/>
            <person name="Klein C."/>
            <person name="Kobayashi Y."/>
            <person name="Koetter P."/>
            <person name="Koningstein G."/>
            <person name="Krogh S."/>
            <person name="Kumano M."/>
            <person name="Kurita K."/>
            <person name="Lapidus A."/>
            <person name="Lardinois S."/>
            <person name="Lauber J."/>
            <person name="Lazarevic V."/>
            <person name="Lee S.-M."/>
            <person name="Levine A."/>
            <person name="Liu H."/>
            <person name="Masuda S."/>
            <person name="Mauel C."/>
            <person name="Medigue C."/>
            <person name="Medina N."/>
            <person name="Mellado R.P."/>
            <person name="Mizuno M."/>
            <person name="Moestl D."/>
            <person name="Nakai S."/>
            <person name="Noback M."/>
            <person name="Noone D."/>
            <person name="O'Reilly M."/>
            <person name="Ogawa K."/>
            <person name="Ogiwara A."/>
            <person name="Oudega B."/>
            <person name="Park S.-H."/>
            <person name="Parro V."/>
            <person name="Pohl T.M."/>
            <person name="Portetelle D."/>
            <person name="Porwollik S."/>
            <person name="Prescott A.M."/>
            <person name="Presecan E."/>
            <person name="Pujic P."/>
            <person name="Purnelle B."/>
            <person name="Rapoport G."/>
            <person name="Rey M."/>
            <person name="Reynolds S."/>
            <person name="Rieger M."/>
            <person name="Rivolta C."/>
            <person name="Rocha E."/>
            <person name="Roche B."/>
            <person name="Rose M."/>
            <person name="Sadaie Y."/>
            <person name="Sato T."/>
            <person name="Scanlan E."/>
            <person name="Schleich S."/>
            <person name="Schroeter R."/>
            <person name="Scoffone F."/>
            <person name="Sekiguchi J."/>
            <person name="Sekowska A."/>
            <person name="Seror S.J."/>
            <person name="Serror P."/>
            <person name="Shin B.-S."/>
            <person name="Soldo B."/>
            <person name="Sorokin A."/>
            <person name="Tacconi E."/>
            <person name="Takagi T."/>
            <person name="Takahashi H."/>
            <person name="Takemaru K."/>
            <person name="Takeuchi M."/>
            <person name="Tamakoshi A."/>
            <person name="Tanaka T."/>
            <person name="Terpstra P."/>
            <person name="Tognoni A."/>
            <person name="Tosato V."/>
            <person name="Uchiyama S."/>
            <person name="Vandenbol M."/>
            <person name="Vannier F."/>
            <person name="Vassarotti A."/>
            <person name="Viari A."/>
            <person name="Wambutt R."/>
            <person name="Wedler E."/>
            <person name="Wedler H."/>
            <person name="Weitzenegger T."/>
            <person name="Winters P."/>
            <person name="Wipat A."/>
            <person name="Yamamoto H."/>
            <person name="Yamane K."/>
            <person name="Yasumoto K."/>
            <person name="Yata K."/>
            <person name="Yoshida K."/>
            <person name="Yoshikawa H.-F."/>
            <person name="Zumstein E."/>
            <person name="Yoshikawa H."/>
            <person name="Danchin A."/>
        </authorList>
    </citation>
    <scope>NUCLEOTIDE SEQUENCE [LARGE SCALE GENOMIC DNA]</scope>
    <source>
        <strain>168</strain>
    </source>
</reference>
<reference key="4">
    <citation type="journal article" date="1998" name="J. Bacteriol.">
        <title>All seven comG open reading frames are required for DNA binding during transformation of competent Bacillus subtilis.</title>
        <authorList>
            <person name="Chung Y.S."/>
            <person name="Dubnau D.A."/>
        </authorList>
    </citation>
    <scope>FUNCTION</scope>
</reference>
<reference key="5">
    <citation type="journal article" date="1998" name="Mol. Microbiol.">
        <title>Cell surface localization and processing of the ComG proteins, required for DNA binding during transformation of Bacillus subtilis.</title>
        <authorList>
            <person name="Chung Y.S."/>
            <person name="Breidt F."/>
            <person name="Dubnau D.A."/>
        </authorList>
    </citation>
    <scope>SUBCELLULAR LOCATION</scope>
</reference>
<sequence>MNIKLNEEKGFTLLESLLVLSLASILLVAVFTTLPPAYDNTAVRQAASQLKNDIMLTQQTAISRQQRTKILFHKKEYQLVIGDTVIERPYATGLSIELLTLKDRLEFNEKGHPNAGGKIRVKGHAVYDITVYLGSGRVNVERK</sequence>